<comment type="function">
    <text evidence="1 3">Catalyzes the reversible conversion of beta-D-fructose 1,6-bisphosphate (FBP) into two triose phosphate and plays a key role in glycolysis and gluconeogenesis (By similarity). In addition, may also function as scaffolding protein (By similarity).</text>
</comment>
<comment type="catalytic activity">
    <reaction evidence="3">
        <text>beta-D-fructose 1,6-bisphosphate = D-glyceraldehyde 3-phosphate + dihydroxyacetone phosphate</text>
        <dbReference type="Rhea" id="RHEA:14729"/>
        <dbReference type="ChEBI" id="CHEBI:32966"/>
        <dbReference type="ChEBI" id="CHEBI:57642"/>
        <dbReference type="ChEBI" id="CHEBI:59776"/>
        <dbReference type="EC" id="4.1.2.13"/>
    </reaction>
    <physiologicalReaction direction="left-to-right" evidence="3">
        <dbReference type="Rhea" id="RHEA:14730"/>
    </physiologicalReaction>
</comment>
<comment type="pathway">
    <text>Carbohydrate degradation; glycolysis; D-glyceraldehyde 3-phosphate and glycerone phosphate from D-glucose: step 4/4.</text>
</comment>
<comment type="subunit">
    <text evidence="1">Homotetramer. Interacts with SNX9 and WAS. Interacts with FBP2; the interaction blocks FBP2 inhibition by physiological concentrations of AMP and reduces inhibition by Ca(2+) (By similarity).</text>
</comment>
<comment type="subcellular location">
    <subcellularLocation>
        <location evidence="2">Cytoplasm</location>
        <location evidence="2">Myofibril</location>
        <location evidence="2">Sarcomere</location>
        <location evidence="2">I band</location>
    </subcellularLocation>
    <subcellularLocation>
        <location evidence="2">Cytoplasm</location>
        <location evidence="2">Myofibril</location>
        <location evidence="2">Sarcomere</location>
        <location evidence="2">M line</location>
    </subcellularLocation>
    <text evidence="2">In skeletal muscle, accumulates around the M line and within the I band, colocalizing with FBP2 on both sides of the Z line in the absence of Ca(2+).</text>
</comment>
<comment type="miscellaneous">
    <text>In vertebrates, three forms of this ubiquitous glycolytic enzyme are found, aldolase A in muscle, aldolase B in liver and aldolase C in brain.</text>
</comment>
<comment type="similarity">
    <text evidence="6">Belongs to the class I fructose-bisphosphate aldolase family.</text>
</comment>
<evidence type="ECO:0000250" key="1"/>
<evidence type="ECO:0000250" key="2">
    <source>
        <dbReference type="UniProtKB" id="P00883"/>
    </source>
</evidence>
<evidence type="ECO:0000250" key="3">
    <source>
        <dbReference type="UniProtKB" id="P04075"/>
    </source>
</evidence>
<evidence type="ECO:0000250" key="4">
    <source>
        <dbReference type="UniProtKB" id="P05065"/>
    </source>
</evidence>
<evidence type="ECO:0000250" key="5">
    <source>
        <dbReference type="UniProtKB" id="P09972"/>
    </source>
</evidence>
<evidence type="ECO:0000305" key="6"/>
<accession>A5A6I5</accession>
<dbReference type="EC" id="4.1.2.13" evidence="3"/>
<dbReference type="EMBL" id="AB222113">
    <property type="protein sequence ID" value="BAF62358.1"/>
    <property type="molecule type" value="mRNA"/>
</dbReference>
<dbReference type="RefSeq" id="NP_001138305.1">
    <property type="nucleotide sequence ID" value="NM_001144833.1"/>
</dbReference>
<dbReference type="SMR" id="A5A6I5"/>
<dbReference type="FunCoup" id="A5A6I5">
    <property type="interactions" value="1464"/>
</dbReference>
<dbReference type="STRING" id="9598.ENSPTRP00000064780"/>
<dbReference type="PaxDb" id="9598-ENSPTRP00000055755"/>
<dbReference type="GeneID" id="454362"/>
<dbReference type="CTD" id="226"/>
<dbReference type="eggNOG" id="KOG1557">
    <property type="taxonomic scope" value="Eukaryota"/>
</dbReference>
<dbReference type="InParanoid" id="A5A6I5"/>
<dbReference type="UniPathway" id="UPA00109">
    <property type="reaction ID" value="UER00183"/>
</dbReference>
<dbReference type="Proteomes" id="UP000002277">
    <property type="component" value="Unplaced"/>
</dbReference>
<dbReference type="GO" id="GO:0005829">
    <property type="term" value="C:cytosol"/>
    <property type="evidence" value="ECO:0000318"/>
    <property type="project" value="GO_Central"/>
</dbReference>
<dbReference type="GO" id="GO:0031674">
    <property type="term" value="C:I band"/>
    <property type="evidence" value="ECO:0007669"/>
    <property type="project" value="UniProtKB-SubCell"/>
</dbReference>
<dbReference type="GO" id="GO:0031430">
    <property type="term" value="C:M band"/>
    <property type="evidence" value="ECO:0007669"/>
    <property type="project" value="UniProtKB-SubCell"/>
</dbReference>
<dbReference type="GO" id="GO:0004332">
    <property type="term" value="F:fructose-bisphosphate aldolase activity"/>
    <property type="evidence" value="ECO:0000250"/>
    <property type="project" value="UniProtKB"/>
</dbReference>
<dbReference type="GO" id="GO:0030388">
    <property type="term" value="P:fructose 1,6-bisphosphate metabolic process"/>
    <property type="evidence" value="ECO:0000318"/>
    <property type="project" value="GO_Central"/>
</dbReference>
<dbReference type="GO" id="GO:0006096">
    <property type="term" value="P:glycolytic process"/>
    <property type="evidence" value="ECO:0000250"/>
    <property type="project" value="UniProtKB"/>
</dbReference>
<dbReference type="GO" id="GO:0051289">
    <property type="term" value="P:protein homotetramerization"/>
    <property type="evidence" value="ECO:0000250"/>
    <property type="project" value="UniProtKB"/>
</dbReference>
<dbReference type="CDD" id="cd00948">
    <property type="entry name" value="FBP_aldolase_I_a"/>
    <property type="match status" value="1"/>
</dbReference>
<dbReference type="FunFam" id="3.20.20.70:FF:000021">
    <property type="entry name" value="Fructose-bisphosphate aldolase"/>
    <property type="match status" value="1"/>
</dbReference>
<dbReference type="Gene3D" id="3.20.20.70">
    <property type="entry name" value="Aldolase class I"/>
    <property type="match status" value="1"/>
</dbReference>
<dbReference type="InterPro" id="IPR029768">
    <property type="entry name" value="Aldolase_I_AS"/>
</dbReference>
<dbReference type="InterPro" id="IPR013785">
    <property type="entry name" value="Aldolase_TIM"/>
</dbReference>
<dbReference type="InterPro" id="IPR000741">
    <property type="entry name" value="FBA_I"/>
</dbReference>
<dbReference type="NCBIfam" id="NF033379">
    <property type="entry name" value="FrucBisAld_I"/>
    <property type="match status" value="1"/>
</dbReference>
<dbReference type="PANTHER" id="PTHR11627">
    <property type="entry name" value="FRUCTOSE-BISPHOSPHATE ALDOLASE"/>
    <property type="match status" value="1"/>
</dbReference>
<dbReference type="Pfam" id="PF00274">
    <property type="entry name" value="Glycolytic"/>
    <property type="match status" value="1"/>
</dbReference>
<dbReference type="SUPFAM" id="SSF51569">
    <property type="entry name" value="Aldolase"/>
    <property type="match status" value="1"/>
</dbReference>
<dbReference type="PROSITE" id="PS00158">
    <property type="entry name" value="ALDOLASE_CLASS_I"/>
    <property type="match status" value="1"/>
</dbReference>
<reference key="1">
    <citation type="journal article" date="2007" name="Gene">
        <title>Mapping of chimpanzee full-length cDNAs onto the human genome unveils large potential divergence of the transcriptome.</title>
        <authorList>
            <person name="Sakate R."/>
            <person name="Suto Y."/>
            <person name="Imanishi T."/>
            <person name="Tanoue T."/>
            <person name="Hida M."/>
            <person name="Hayasaka I."/>
            <person name="Kusuda J."/>
            <person name="Gojobori T."/>
            <person name="Hashimoto K."/>
            <person name="Hirai M."/>
        </authorList>
    </citation>
    <scope>NUCLEOTIDE SEQUENCE [MRNA]</scope>
    <source>
        <tissue>Cerebellum</tissue>
    </source>
</reference>
<keyword id="KW-0007">Acetylation</keyword>
<keyword id="KW-0963">Cytoplasm</keyword>
<keyword id="KW-0324">Glycolysis</keyword>
<keyword id="KW-0379">Hydroxylation</keyword>
<keyword id="KW-1017">Isopeptide bond</keyword>
<keyword id="KW-0456">Lyase</keyword>
<keyword id="KW-0597">Phosphoprotein</keyword>
<keyword id="KW-1185">Reference proteome</keyword>
<keyword id="KW-0704">Schiff base</keyword>
<keyword id="KW-0832">Ubl conjugation</keyword>
<proteinExistence type="evidence at transcript level"/>
<gene>
    <name type="primary">ALDOA</name>
</gene>
<organism>
    <name type="scientific">Pan troglodytes</name>
    <name type="common">Chimpanzee</name>
    <dbReference type="NCBI Taxonomy" id="9598"/>
    <lineage>
        <taxon>Eukaryota</taxon>
        <taxon>Metazoa</taxon>
        <taxon>Chordata</taxon>
        <taxon>Craniata</taxon>
        <taxon>Vertebrata</taxon>
        <taxon>Euteleostomi</taxon>
        <taxon>Mammalia</taxon>
        <taxon>Eutheria</taxon>
        <taxon>Euarchontoglires</taxon>
        <taxon>Primates</taxon>
        <taxon>Haplorrhini</taxon>
        <taxon>Catarrhini</taxon>
        <taxon>Hominidae</taxon>
        <taxon>Pan</taxon>
    </lineage>
</organism>
<sequence length="364" mass="39434">MPYQYPALTPEQKKELSDIAHRIVAPGKGILAADESTGSIAKRLQSIGTENTEENRRFYRQLLLTADDRVNPCIVGVILFHETLYQKADDGRPFPQVIKSKGGVVGIKVDKGVVPLAGTNGETTTQGLDGLSERCAQYKKDGADFAKWRCVLKIGEHTPSALAIMENANVLARYASICQQNGIVPIAEPEILPDGDHDLKRCQYVTEKVLAAVYKALSDHHIYLEGTLLKPNMVTPGHACTQKFSHEEIAMATVTALRRTVPPAVTGITFLSGGQSEEEASINLNAINKCPLLKPWALTFSYGRALQASALKAWGGKKENLKAAQEEYVKRALANSLACQGKYTPSGQAGAAASESLFVSNHAY</sequence>
<feature type="chain" id="PRO_0000295307" description="Fructose-bisphosphate aldolase A">
    <location>
        <begin position="1"/>
        <end position="364"/>
    </location>
</feature>
<feature type="active site" description="Proton acceptor" evidence="2">
    <location>
        <position position="188"/>
    </location>
</feature>
<feature type="active site" description="Schiff-base intermediate with dihydroxyacetone-P" evidence="2">
    <location>
        <position position="230"/>
    </location>
</feature>
<feature type="binding site" evidence="2">
    <location>
        <position position="43"/>
    </location>
    <ligand>
        <name>beta-D-fructose 1,6-bisphosphate</name>
        <dbReference type="ChEBI" id="CHEBI:32966"/>
    </ligand>
</feature>
<feature type="binding site" evidence="2">
    <location>
        <begin position="272"/>
        <end position="274"/>
    </location>
    <ligand>
        <name>beta-D-fructose 1,6-bisphosphate</name>
        <dbReference type="ChEBI" id="CHEBI:32966"/>
    </ligand>
</feature>
<feature type="binding site" evidence="2">
    <location>
        <position position="301"/>
    </location>
    <ligand>
        <name>beta-D-fructose 1,6-bisphosphate</name>
        <dbReference type="ChEBI" id="CHEBI:32966"/>
    </ligand>
</feature>
<feature type="binding site" evidence="2">
    <location>
        <position position="304"/>
    </location>
    <ligand>
        <name>beta-D-fructose 1,6-bisphosphate</name>
        <dbReference type="ChEBI" id="CHEBI:32966"/>
    </ligand>
</feature>
<feature type="site" description="Necessary for preference for fructose 1,6-bisphosphate over fructose 1-phosphate">
    <location>
        <position position="364"/>
    </location>
</feature>
<feature type="modified residue" description="Phosphotyrosine" evidence="4">
    <location>
        <position position="5"/>
    </location>
</feature>
<feature type="modified residue" description="Phosphothreonine" evidence="3">
    <location>
        <position position="9"/>
    </location>
</feature>
<feature type="modified residue" description="Phosphoserine" evidence="3">
    <location>
        <position position="36"/>
    </location>
</feature>
<feature type="modified residue" description="Phosphoserine" evidence="3">
    <location>
        <position position="39"/>
    </location>
</feature>
<feature type="modified residue" description="N6-acetyllysine; alternate" evidence="3">
    <location>
        <position position="42"/>
    </location>
</feature>
<feature type="modified residue" description="Phosphoserine" evidence="3">
    <location>
        <position position="46"/>
    </location>
</feature>
<feature type="modified residue" description="N6-(2-hydroxyisobutyryl)lysine" evidence="3">
    <location>
        <position position="99"/>
    </location>
</feature>
<feature type="modified residue" description="N6-acetyllysine" evidence="3">
    <location>
        <position position="108"/>
    </location>
</feature>
<feature type="modified residue" description="N6-acetyllysine; alternate" evidence="5">
    <location>
        <position position="111"/>
    </location>
</feature>
<feature type="modified residue" description="N6-malonyllysine; alternate" evidence="1">
    <location>
        <position position="111"/>
    </location>
</feature>
<feature type="modified residue" description="Phosphoserine" evidence="4">
    <location>
        <position position="132"/>
    </location>
</feature>
<feature type="modified residue" description="N6-(2-hydroxyisobutyryl)lysine" evidence="3">
    <location>
        <position position="147"/>
    </location>
</feature>
<feature type="modified residue" description="Phosphoserine" evidence="3">
    <location>
        <position position="272"/>
    </location>
</feature>
<feature type="modified residue" description="N6-malonyllysine" evidence="1">
    <location>
        <position position="312"/>
    </location>
</feature>
<feature type="modified residue" description="N6-acetyllysine" evidence="3">
    <location>
        <position position="330"/>
    </location>
</feature>
<feature type="cross-link" description="Glycyl lysine isopeptide (Lys-Gly) (interchain with G-Cter in SUMO1); alternate" evidence="3">
    <location>
        <position position="42"/>
    </location>
</feature>
<feature type="cross-link" description="Glycyl lysine isopeptide (Lys-Gly) (interchain with G-Cter in SUMO2); alternate" evidence="3">
    <location>
        <position position="42"/>
    </location>
</feature>
<name>ALDOA_PANTR</name>
<protein>
    <recommendedName>
        <fullName>Fructose-bisphosphate aldolase A</fullName>
        <ecNumber evidence="3">4.1.2.13</ecNumber>
    </recommendedName>
    <alternativeName>
        <fullName>Muscle-type aldolase</fullName>
    </alternativeName>
</protein>